<organism>
    <name type="scientific">Homo sapiens</name>
    <name type="common">Human</name>
    <dbReference type="NCBI Taxonomy" id="9606"/>
    <lineage>
        <taxon>Eukaryota</taxon>
        <taxon>Metazoa</taxon>
        <taxon>Chordata</taxon>
        <taxon>Craniata</taxon>
        <taxon>Vertebrata</taxon>
        <taxon>Euteleostomi</taxon>
        <taxon>Mammalia</taxon>
        <taxon>Eutheria</taxon>
        <taxon>Euarchontoglires</taxon>
        <taxon>Primates</taxon>
        <taxon>Haplorrhini</taxon>
        <taxon>Catarrhini</taxon>
        <taxon>Hominidae</taxon>
        <taxon>Homo</taxon>
    </lineage>
</organism>
<dbReference type="EMBL" id="AF525164">
    <property type="protein sequence ID" value="AAQ08897.1"/>
    <property type="molecule type" value="mRNA"/>
</dbReference>
<dbReference type="EMBL" id="AL833902">
    <property type="protein sequence ID" value="CAD38758.1"/>
    <property type="status" value="ALT_INIT"/>
    <property type="molecule type" value="mRNA"/>
</dbReference>
<dbReference type="EMBL" id="AC009027">
    <property type="status" value="NOT_ANNOTATED_CDS"/>
    <property type="molecule type" value="Genomic_DNA"/>
</dbReference>
<dbReference type="EMBL" id="CH471092">
    <property type="protein sequence ID" value="EAW83250.1"/>
    <property type="molecule type" value="Genomic_DNA"/>
</dbReference>
<dbReference type="EMBL" id="AK000407">
    <property type="protein sequence ID" value="BAA91144.1"/>
    <property type="molecule type" value="mRNA"/>
</dbReference>
<dbReference type="CCDS" id="CCDS92188.1"/>
<dbReference type="RefSeq" id="NP_001002847.1">
    <property type="nucleotide sequence ID" value="NM_001002847.4"/>
</dbReference>
<dbReference type="RefSeq" id="NP_001035234.2">
    <property type="nucleotide sequence ID" value="NM_001040144.3"/>
</dbReference>
<dbReference type="RefSeq" id="NP_001353532.1">
    <property type="nucleotide sequence ID" value="NM_001366603.2"/>
</dbReference>
<dbReference type="RefSeq" id="NP_001353533.1">
    <property type="nucleotide sequence ID" value="NM_001366604.2"/>
</dbReference>
<dbReference type="RefSeq" id="XP_011521469.1">
    <property type="nucleotide sequence ID" value="XM_011523167.1"/>
</dbReference>
<dbReference type="RefSeq" id="XP_011521470.1">
    <property type="nucleotide sequence ID" value="XM_011523168.1"/>
</dbReference>
<dbReference type="FunCoup" id="P0CG12">
    <property type="interactions" value="37"/>
</dbReference>
<dbReference type="IntAct" id="P0CG12">
    <property type="interactions" value="5"/>
</dbReference>
<dbReference type="GlyCosmos" id="P0CG12">
    <property type="glycosylation" value="7 sites, 2 glycans"/>
</dbReference>
<dbReference type="GlyGen" id="P0CG12">
    <property type="glycosylation" value="10 sites, 2 O-linked glycans (9 sites)"/>
</dbReference>
<dbReference type="iPTMnet" id="P0CG12"/>
<dbReference type="MetOSite" id="P0CG12"/>
<dbReference type="PhosphoSitePlus" id="P0CG12"/>
<dbReference type="BioMuta" id="CHTF8"/>
<dbReference type="DMDM" id="298351628"/>
<dbReference type="jPOST" id="P0CG12"/>
<dbReference type="MassIVE" id="P0CG12"/>
<dbReference type="PeptideAtlas" id="P0CG12"/>
<dbReference type="Pumba" id="P0CG12"/>
<dbReference type="Ensembl" id="ENST00000306585.9">
    <property type="protein sequence ID" value="ENSP00000305687.6"/>
    <property type="gene ID" value="ENSG00000286140.2"/>
</dbReference>
<dbReference type="Ensembl" id="ENST00000519520.7">
    <property type="protein sequence ID" value="ENSP00000427718.2"/>
    <property type="gene ID" value="ENSG00000286140.2"/>
</dbReference>
<dbReference type="GeneID" id="113455421"/>
<dbReference type="MANE-Select" id="ENST00000519520.7">
    <property type="protein sequence ID" value="ENSP00000427718.2"/>
    <property type="RefSeq nucleotide sequence ID" value="NM_001002847.4"/>
    <property type="RefSeq protein sequence ID" value="NP_001002847.1"/>
</dbReference>
<dbReference type="UCSC" id="uc059wiz.1">
    <property type="organism name" value="human"/>
</dbReference>
<dbReference type="AGR" id="HGNC:54084"/>
<dbReference type="GeneCards" id="DERPC"/>
<dbReference type="HGNC" id="HGNC:54084">
    <property type="gene designation" value="DERPC"/>
</dbReference>
<dbReference type="HPA" id="ENSG00000286140">
    <property type="expression patterns" value="Low tissue specificity"/>
</dbReference>
<dbReference type="MIM" id="613202">
    <property type="type" value="gene"/>
</dbReference>
<dbReference type="neXtProt" id="NX_P0CG12"/>
<dbReference type="VEuPathDB" id="HostDB:ENSG00000286140"/>
<dbReference type="GeneTree" id="ENSGT00650000093476"/>
<dbReference type="HOGENOM" id="CLU_036906_1_0_1"/>
<dbReference type="InParanoid" id="P0CG12"/>
<dbReference type="OMA" id="TGVNPQI"/>
<dbReference type="OrthoDB" id="9833216at2759"/>
<dbReference type="PAN-GO" id="P0CG12">
    <property type="GO annotations" value="0 GO annotations based on evolutionary models"/>
</dbReference>
<dbReference type="PhylomeDB" id="P0CG12"/>
<dbReference type="PathwayCommons" id="P0CG12"/>
<dbReference type="SignaLink" id="P0CG12"/>
<dbReference type="BioGRID-ORCS" id="54921">
    <property type="hits" value="388 hits in 1166 CRISPR screens"/>
</dbReference>
<dbReference type="ChiTaRS" id="CHTF8">
    <property type="organism name" value="human"/>
</dbReference>
<dbReference type="GenomeRNAi" id="54921"/>
<dbReference type="Pharos" id="P0CG12">
    <property type="development level" value="Tdark"/>
</dbReference>
<dbReference type="PRO" id="PR:P0CG12"/>
<dbReference type="Proteomes" id="UP000005640">
    <property type="component" value="Chromosome 16"/>
</dbReference>
<dbReference type="RNAct" id="P0CG12">
    <property type="molecule type" value="protein"/>
</dbReference>
<dbReference type="Bgee" id="ENSG00000286140">
    <property type="expression patterns" value="Expressed in ganglionic eminence and 95 other cell types or tissues"/>
</dbReference>
<dbReference type="ExpressionAtlas" id="P0CG12">
    <property type="expression patterns" value="differential"/>
</dbReference>
<dbReference type="GO" id="GO:0070062">
    <property type="term" value="C:extracellular exosome"/>
    <property type="evidence" value="ECO:0007005"/>
    <property type="project" value="UniProtKB"/>
</dbReference>
<dbReference type="GO" id="GO:0005654">
    <property type="term" value="C:nucleoplasm"/>
    <property type="evidence" value="ECO:0000314"/>
    <property type="project" value="HPA"/>
</dbReference>
<dbReference type="PANTHER" id="PTHR28605">
    <property type="entry name" value="CTF8, CHROMOSOME TRANSMISSION FIDELITY FACTOR 8 HOMOLOG (S. CEREVISIAE)"/>
    <property type="match status" value="1"/>
</dbReference>
<dbReference type="PANTHER" id="PTHR28605:SF2">
    <property type="entry name" value="DECREASED EXPRESSION IN RENAL AND PROSTATE CANCER PROTEIN"/>
    <property type="match status" value="1"/>
</dbReference>
<accession>P0CG12</accession>
<accession>A8MYX8</accession>
<accession>Q71E72</accession>
<accession>Q8NDH8</accession>
<accession>Q8WV66</accession>
<accession>Q9NX73</accession>
<reference key="1">
    <citation type="journal article" date="2002" name="Mol. Med.">
        <title>A human novel gene DERPC on 16q22.1 inhibits prostate tumor cell growth and its expression is decreased in prostate and renal tumors.</title>
        <authorList>
            <person name="Sun M."/>
            <person name="Ma L."/>
            <person name="Xu L."/>
            <person name="Li J."/>
            <person name="Zhang W."/>
            <person name="Petrovics G."/>
            <person name="Makarem M."/>
            <person name="Sesterhenn I."/>
            <person name="Zhang M."/>
            <person name="Blanchette-Mackie E.J."/>
            <person name="Moul J."/>
            <person name="Srivastava S."/>
            <person name="Zou Z."/>
        </authorList>
    </citation>
    <scope>NUCLEOTIDE SEQUENCE [MRNA]</scope>
    <scope>TISSUE SPECIFICITY</scope>
    <scope>FUNCTION</scope>
    <scope>SUBCELLULAR LOCATION</scope>
</reference>
<reference key="2">
    <citation type="journal article" date="2007" name="BMC Genomics">
        <title>The full-ORF clone resource of the German cDNA consortium.</title>
        <authorList>
            <person name="Bechtel S."/>
            <person name="Rosenfelder H."/>
            <person name="Duda A."/>
            <person name="Schmidt C.P."/>
            <person name="Ernst U."/>
            <person name="Wellenreuther R."/>
            <person name="Mehrle A."/>
            <person name="Schuster C."/>
            <person name="Bahr A."/>
            <person name="Bloecker H."/>
            <person name="Heubner D."/>
            <person name="Hoerlein A."/>
            <person name="Michel G."/>
            <person name="Wedler H."/>
            <person name="Koehrer K."/>
            <person name="Ottenwaelder B."/>
            <person name="Poustka A."/>
            <person name="Wiemann S."/>
            <person name="Schupp I."/>
        </authorList>
    </citation>
    <scope>NUCLEOTIDE SEQUENCE [LARGE SCALE MRNA]</scope>
    <source>
        <tissue>Testis</tissue>
    </source>
</reference>
<reference key="3">
    <citation type="journal article" date="2004" name="Nature">
        <title>The sequence and analysis of duplication-rich human chromosome 16.</title>
        <authorList>
            <person name="Martin J."/>
            <person name="Han C."/>
            <person name="Gordon L.A."/>
            <person name="Terry A."/>
            <person name="Prabhakar S."/>
            <person name="She X."/>
            <person name="Xie G."/>
            <person name="Hellsten U."/>
            <person name="Chan Y.M."/>
            <person name="Altherr M."/>
            <person name="Couronne O."/>
            <person name="Aerts A."/>
            <person name="Bajorek E."/>
            <person name="Black S."/>
            <person name="Blumer H."/>
            <person name="Branscomb E."/>
            <person name="Brown N.C."/>
            <person name="Bruno W.J."/>
            <person name="Buckingham J.M."/>
            <person name="Callen D.F."/>
            <person name="Campbell C.S."/>
            <person name="Campbell M.L."/>
            <person name="Campbell E.W."/>
            <person name="Caoile C."/>
            <person name="Challacombe J.F."/>
            <person name="Chasteen L.A."/>
            <person name="Chertkov O."/>
            <person name="Chi H.C."/>
            <person name="Christensen M."/>
            <person name="Clark L.M."/>
            <person name="Cohn J.D."/>
            <person name="Denys M."/>
            <person name="Detter J.C."/>
            <person name="Dickson M."/>
            <person name="Dimitrijevic-Bussod M."/>
            <person name="Escobar J."/>
            <person name="Fawcett J.J."/>
            <person name="Flowers D."/>
            <person name="Fotopulos D."/>
            <person name="Glavina T."/>
            <person name="Gomez M."/>
            <person name="Gonzales E."/>
            <person name="Goodstein D."/>
            <person name="Goodwin L.A."/>
            <person name="Grady D.L."/>
            <person name="Grigoriev I."/>
            <person name="Groza M."/>
            <person name="Hammon N."/>
            <person name="Hawkins T."/>
            <person name="Haydu L."/>
            <person name="Hildebrand C.E."/>
            <person name="Huang W."/>
            <person name="Israni S."/>
            <person name="Jett J."/>
            <person name="Jewett P.B."/>
            <person name="Kadner K."/>
            <person name="Kimball H."/>
            <person name="Kobayashi A."/>
            <person name="Krawczyk M.-C."/>
            <person name="Leyba T."/>
            <person name="Longmire J.L."/>
            <person name="Lopez F."/>
            <person name="Lou Y."/>
            <person name="Lowry S."/>
            <person name="Ludeman T."/>
            <person name="Manohar C.F."/>
            <person name="Mark G.A."/>
            <person name="McMurray K.L."/>
            <person name="Meincke L.J."/>
            <person name="Morgan J."/>
            <person name="Moyzis R.K."/>
            <person name="Mundt M.O."/>
            <person name="Munk A.C."/>
            <person name="Nandkeshwar R.D."/>
            <person name="Pitluck S."/>
            <person name="Pollard M."/>
            <person name="Predki P."/>
            <person name="Parson-Quintana B."/>
            <person name="Ramirez L."/>
            <person name="Rash S."/>
            <person name="Retterer J."/>
            <person name="Ricke D.O."/>
            <person name="Robinson D.L."/>
            <person name="Rodriguez A."/>
            <person name="Salamov A."/>
            <person name="Saunders E.H."/>
            <person name="Scott D."/>
            <person name="Shough T."/>
            <person name="Stallings R.L."/>
            <person name="Stalvey M."/>
            <person name="Sutherland R.D."/>
            <person name="Tapia R."/>
            <person name="Tesmer J.G."/>
            <person name="Thayer N."/>
            <person name="Thompson L.S."/>
            <person name="Tice H."/>
            <person name="Torney D.C."/>
            <person name="Tran-Gyamfi M."/>
            <person name="Tsai M."/>
            <person name="Ulanovsky L.E."/>
            <person name="Ustaszewska A."/>
            <person name="Vo N."/>
            <person name="White P.S."/>
            <person name="Williams A.L."/>
            <person name="Wills P.L."/>
            <person name="Wu J.-R."/>
            <person name="Wu K."/>
            <person name="Yang J."/>
            <person name="DeJong P."/>
            <person name="Bruce D."/>
            <person name="Doggett N.A."/>
            <person name="Deaven L."/>
            <person name="Schmutz J."/>
            <person name="Grimwood J."/>
            <person name="Richardson P."/>
            <person name="Rokhsar D.S."/>
            <person name="Eichler E.E."/>
            <person name="Gilna P."/>
            <person name="Lucas S.M."/>
            <person name="Myers R.M."/>
            <person name="Rubin E.M."/>
            <person name="Pennacchio L.A."/>
        </authorList>
    </citation>
    <scope>NUCLEOTIDE SEQUENCE [LARGE SCALE GENOMIC DNA]</scope>
</reference>
<reference key="4">
    <citation type="submission" date="2005-07" db="EMBL/GenBank/DDBJ databases">
        <authorList>
            <person name="Mural R.J."/>
            <person name="Istrail S."/>
            <person name="Sutton G.G."/>
            <person name="Florea L."/>
            <person name="Halpern A.L."/>
            <person name="Mobarry C.M."/>
            <person name="Lippert R."/>
            <person name="Walenz B."/>
            <person name="Shatkay H."/>
            <person name="Dew I."/>
            <person name="Miller J.R."/>
            <person name="Flanigan M.J."/>
            <person name="Edwards N.J."/>
            <person name="Bolanos R."/>
            <person name="Fasulo D."/>
            <person name="Halldorsson B.V."/>
            <person name="Hannenhalli S."/>
            <person name="Turner R."/>
            <person name="Yooseph S."/>
            <person name="Lu F."/>
            <person name="Nusskern D.R."/>
            <person name="Shue B.C."/>
            <person name="Zheng X.H."/>
            <person name="Zhong F."/>
            <person name="Delcher A.L."/>
            <person name="Huson D.H."/>
            <person name="Kravitz S.A."/>
            <person name="Mouchard L."/>
            <person name="Reinert K."/>
            <person name="Remington K.A."/>
            <person name="Clark A.G."/>
            <person name="Waterman M.S."/>
            <person name="Eichler E.E."/>
            <person name="Adams M.D."/>
            <person name="Hunkapiller M.W."/>
            <person name="Myers E.W."/>
            <person name="Venter J.C."/>
        </authorList>
    </citation>
    <scope>NUCLEOTIDE SEQUENCE [LARGE SCALE GENOMIC DNA]</scope>
</reference>
<reference key="5">
    <citation type="journal article" date="2004" name="Nat. Genet.">
        <title>Complete sequencing and characterization of 21,243 full-length human cDNAs.</title>
        <authorList>
            <person name="Ota T."/>
            <person name="Suzuki Y."/>
            <person name="Nishikawa T."/>
            <person name="Otsuki T."/>
            <person name="Sugiyama T."/>
            <person name="Irie R."/>
            <person name="Wakamatsu A."/>
            <person name="Hayashi K."/>
            <person name="Sato H."/>
            <person name="Nagai K."/>
            <person name="Kimura K."/>
            <person name="Makita H."/>
            <person name="Sekine M."/>
            <person name="Obayashi M."/>
            <person name="Nishi T."/>
            <person name="Shibahara T."/>
            <person name="Tanaka T."/>
            <person name="Ishii S."/>
            <person name="Yamamoto J."/>
            <person name="Saito K."/>
            <person name="Kawai Y."/>
            <person name="Isono Y."/>
            <person name="Nakamura Y."/>
            <person name="Nagahari K."/>
            <person name="Murakami K."/>
            <person name="Yasuda T."/>
            <person name="Iwayanagi T."/>
            <person name="Wagatsuma M."/>
            <person name="Shiratori A."/>
            <person name="Sudo H."/>
            <person name="Hosoiri T."/>
            <person name="Kaku Y."/>
            <person name="Kodaira H."/>
            <person name="Kondo H."/>
            <person name="Sugawara M."/>
            <person name="Takahashi M."/>
            <person name="Kanda K."/>
            <person name="Yokoi T."/>
            <person name="Furuya T."/>
            <person name="Kikkawa E."/>
            <person name="Omura Y."/>
            <person name="Abe K."/>
            <person name="Kamihara K."/>
            <person name="Katsuta N."/>
            <person name="Sato K."/>
            <person name="Tanikawa M."/>
            <person name="Yamazaki M."/>
            <person name="Ninomiya K."/>
            <person name="Ishibashi T."/>
            <person name="Yamashita H."/>
            <person name="Murakawa K."/>
            <person name="Fujimori K."/>
            <person name="Tanai H."/>
            <person name="Kimata M."/>
            <person name="Watanabe M."/>
            <person name="Hiraoka S."/>
            <person name="Chiba Y."/>
            <person name="Ishida S."/>
            <person name="Ono Y."/>
            <person name="Takiguchi S."/>
            <person name="Watanabe S."/>
            <person name="Yosida M."/>
            <person name="Hotuta T."/>
            <person name="Kusano J."/>
            <person name="Kanehori K."/>
            <person name="Takahashi-Fujii A."/>
            <person name="Hara H."/>
            <person name="Tanase T.-O."/>
            <person name="Nomura Y."/>
            <person name="Togiya S."/>
            <person name="Komai F."/>
            <person name="Hara R."/>
            <person name="Takeuchi K."/>
            <person name="Arita M."/>
            <person name="Imose N."/>
            <person name="Musashino K."/>
            <person name="Yuuki H."/>
            <person name="Oshima A."/>
            <person name="Sasaki N."/>
            <person name="Aotsuka S."/>
            <person name="Yoshikawa Y."/>
            <person name="Matsunawa H."/>
            <person name="Ichihara T."/>
            <person name="Shiohata N."/>
            <person name="Sano S."/>
            <person name="Moriya S."/>
            <person name="Momiyama H."/>
            <person name="Satoh N."/>
            <person name="Takami S."/>
            <person name="Terashima Y."/>
            <person name="Suzuki O."/>
            <person name="Nakagawa S."/>
            <person name="Senoh A."/>
            <person name="Mizoguchi H."/>
            <person name="Goto Y."/>
            <person name="Shimizu F."/>
            <person name="Wakebe H."/>
            <person name="Hishigaki H."/>
            <person name="Watanabe T."/>
            <person name="Sugiyama A."/>
            <person name="Takemoto M."/>
            <person name="Kawakami B."/>
            <person name="Yamazaki M."/>
            <person name="Watanabe K."/>
            <person name="Kumagai A."/>
            <person name="Itakura S."/>
            <person name="Fukuzumi Y."/>
            <person name="Fujimori Y."/>
            <person name="Komiyama M."/>
            <person name="Tashiro H."/>
            <person name="Tanigami A."/>
            <person name="Fujiwara T."/>
            <person name="Ono T."/>
            <person name="Yamada K."/>
            <person name="Fujii Y."/>
            <person name="Ozaki K."/>
            <person name="Hirao M."/>
            <person name="Ohmori Y."/>
            <person name="Kawabata A."/>
            <person name="Hikiji T."/>
            <person name="Kobatake N."/>
            <person name="Inagaki H."/>
            <person name="Ikema Y."/>
            <person name="Okamoto S."/>
            <person name="Okitani R."/>
            <person name="Kawakami T."/>
            <person name="Noguchi S."/>
            <person name="Itoh T."/>
            <person name="Shigeta K."/>
            <person name="Senba T."/>
            <person name="Matsumura K."/>
            <person name="Nakajima Y."/>
            <person name="Mizuno T."/>
            <person name="Morinaga M."/>
            <person name="Sasaki M."/>
            <person name="Togashi T."/>
            <person name="Oyama M."/>
            <person name="Hata H."/>
            <person name="Watanabe M."/>
            <person name="Komatsu T."/>
            <person name="Mizushima-Sugano J."/>
            <person name="Satoh T."/>
            <person name="Shirai Y."/>
            <person name="Takahashi Y."/>
            <person name="Nakagawa K."/>
            <person name="Okumura K."/>
            <person name="Nagase T."/>
            <person name="Nomura N."/>
            <person name="Kikuchi H."/>
            <person name="Masuho Y."/>
            <person name="Yamashita R."/>
            <person name="Nakai K."/>
            <person name="Yada T."/>
            <person name="Nakamura Y."/>
            <person name="Ohara O."/>
            <person name="Isogai T."/>
            <person name="Sugano S."/>
        </authorList>
    </citation>
    <scope>NUCLEOTIDE SEQUENCE [LARGE SCALE MRNA] OF 1-310</scope>
</reference>
<reference key="6">
    <citation type="journal article" date="2009" name="Breast Cancer Res. Treat.">
        <title>Loss of expression of chromosome 16q genes DPEP1 and CTCF in lobular carcinoma in situ of the breast.</title>
        <authorList>
            <person name="Green A.R."/>
            <person name="Krivinskas S."/>
            <person name="Young P."/>
            <person name="Rakha E.A."/>
            <person name="Paish E.C."/>
            <person name="Powe D.G."/>
            <person name="Ellis I.O."/>
        </authorList>
    </citation>
    <scope>TISSUE SPECIFICITY</scope>
</reference>
<reference key="7">
    <citation type="journal article" date="2009" name="Sci. Signal.">
        <title>Quantitative phosphoproteomic analysis of T cell receptor signaling reveals system-wide modulation of protein-protein interactions.</title>
        <authorList>
            <person name="Mayya V."/>
            <person name="Lundgren D.H."/>
            <person name="Hwang S.-I."/>
            <person name="Rezaul K."/>
            <person name="Wu L."/>
            <person name="Eng J.K."/>
            <person name="Rodionov V."/>
            <person name="Han D.K."/>
        </authorList>
    </citation>
    <scope>IDENTIFICATION BY MASS SPECTROMETRY [LARGE SCALE ANALYSIS]</scope>
    <source>
        <tissue>Leukemic T-cell</tissue>
    </source>
</reference>
<reference key="8">
    <citation type="journal article" date="2013" name="J. Proteome Res.">
        <title>Toward a comprehensive characterization of a human cancer cell phosphoproteome.</title>
        <authorList>
            <person name="Zhou H."/>
            <person name="Di Palma S."/>
            <person name="Preisinger C."/>
            <person name="Peng M."/>
            <person name="Polat A.N."/>
            <person name="Heck A.J."/>
            <person name="Mohammed S."/>
        </authorList>
    </citation>
    <scope>PHOSPHORYLATION [LARGE SCALE ANALYSIS] AT SER-302 AND SER-423</scope>
    <scope>IDENTIFICATION BY MASS SPECTROMETRY [LARGE SCALE ANALYSIS]</scope>
    <source>
        <tissue>Erythroleukemia</tissue>
    </source>
</reference>
<evidence type="ECO:0000250" key="1">
    <source>
        <dbReference type="UniProtKB" id="P0CG14"/>
    </source>
</evidence>
<evidence type="ECO:0000256" key="2">
    <source>
        <dbReference type="SAM" id="MobiDB-lite"/>
    </source>
</evidence>
<evidence type="ECO:0000269" key="3">
    <source>
    </source>
</evidence>
<evidence type="ECO:0000269" key="4">
    <source>
    </source>
</evidence>
<evidence type="ECO:0000305" key="5"/>
<evidence type="ECO:0000312" key="6">
    <source>
        <dbReference type="HGNC" id="HGNC:54084"/>
    </source>
</evidence>
<evidence type="ECO:0007744" key="7">
    <source>
    </source>
</evidence>
<protein>
    <recommendedName>
        <fullName evidence="5">Decreased expression in renal and prostate cancer protein</fullName>
    </recommendedName>
</protein>
<gene>
    <name evidence="6" type="primary">DERPC</name>
</gene>
<sequence>MKEPRIFPRERPTPWTRAPLPPRGRLDGSLGPQGGPVLNTGHPLGVNSDPFLMAAGSLGGNLTPFPRNPSPFPASSGSLASNPAPFPAGARDPSMASFPRGMNPTGTGAVSFPRPGGLLGPGPGPGPTLNPRTGALPGPGPLSNPRLGGLPGPGPMSNPRAGGLLGAGPDPRGGGPMGPGSGPNLRAGVLLTSGNGPPNPRPVGLGPGPNPNLRSGFLGTNPAPRSGVFPGPGLGPNPRPSGLGPGPNLDARAGGLLGTGSGLNLRMAGPQGLDLAPILRAAGLLGANSASFSQASGNMGTSPSSMARVPGPMGPNSGPSSRGIGLPGPNPSPMSRAPGPIGPNSAHFSRPVGPMGVNANPFPRGAGSSAFSQSSGTLASNPATFQRSAGLQGSNPTIFPRASGPLGPNPANFPRATGLQGPSPTTFPRSTGPLGPGQVTFPRPAAGHLGPSPAGPVGINPAPFTRPTGTLGLNPASFPRMNGPAGKSFVPFPRVGSLPGTNPAAFPRPGGPMAAMYPNGMLPP</sequence>
<feature type="chain" id="PRO_0000326396" description="Decreased expression in renal and prostate cancer protein">
    <location>
        <begin position="1"/>
        <end position="524"/>
    </location>
</feature>
<feature type="region of interest" description="Disordered" evidence="2">
    <location>
        <begin position="1"/>
        <end position="43"/>
    </location>
</feature>
<feature type="region of interest" description="Disordered" evidence="2">
    <location>
        <begin position="64"/>
        <end position="252"/>
    </location>
</feature>
<feature type="region of interest" description="Disordered" evidence="2">
    <location>
        <begin position="312"/>
        <end position="332"/>
    </location>
</feature>
<feature type="compositionally biased region" description="Basic and acidic residues" evidence="2">
    <location>
        <begin position="1"/>
        <end position="12"/>
    </location>
</feature>
<feature type="compositionally biased region" description="Low complexity" evidence="2">
    <location>
        <begin position="129"/>
        <end position="148"/>
    </location>
</feature>
<feature type="compositionally biased region" description="Gly residues" evidence="2">
    <location>
        <begin position="163"/>
        <end position="181"/>
    </location>
</feature>
<feature type="compositionally biased region" description="Low complexity" evidence="2">
    <location>
        <begin position="312"/>
        <end position="323"/>
    </location>
</feature>
<feature type="modified residue" description="Phosphoserine" evidence="7">
    <location>
        <position position="302"/>
    </location>
</feature>
<feature type="modified residue" description="Asymmetric dimethylarginine" evidence="1">
    <location>
        <position position="364"/>
    </location>
</feature>
<feature type="modified residue" description="Omega-N-methylarginine" evidence="1">
    <location>
        <position position="387"/>
    </location>
</feature>
<feature type="modified residue" description="Phosphoserine" evidence="7">
    <location>
        <position position="423"/>
    </location>
</feature>
<proteinExistence type="evidence at protein level"/>
<keyword id="KW-0488">Methylation</keyword>
<keyword id="KW-0539">Nucleus</keyword>
<keyword id="KW-0597">Phosphoprotein</keyword>
<keyword id="KW-1267">Proteomics identification</keyword>
<keyword id="KW-1185">Reference proteome</keyword>
<name>DERPC_HUMAN</name>
<comment type="function">
    <text evidence="3">Potential tumor suppressor. Inhibits prostate tumor cell growth, when overexpressed.</text>
</comment>
<comment type="subcellular location">
    <subcellularLocation>
        <location evidence="3">Nucleus</location>
    </subcellularLocation>
</comment>
<comment type="tissue specificity">
    <text evidence="3 4">Ubiquitously expressed, with abundant expression in kidney, skeletal muscle, testis, liver, ovary, and heart and moderate expression in prostate. Expression is significantly reduced in renal and prostate tumors. No differential expression in breast cancer cells, between lobular carcinoma and normal lobules.</text>
</comment>
<comment type="miscellaneous">
    <text>Found in a common chromosomal region of deletion in breast cancer.</text>
</comment>
<comment type="similarity">
    <text evidence="5">Belongs to the DERPC family.</text>
</comment>
<comment type="sequence caution" evidence="5">
    <conflict type="erroneous initiation">
        <sequence resource="EMBL-CDS" id="CAD38758"/>
    </conflict>
    <text>Extended N-terminus.</text>
</comment>